<evidence type="ECO:0000255" key="1">
    <source>
        <dbReference type="HAMAP-Rule" id="MF_01100"/>
    </source>
</evidence>
<evidence type="ECO:0000255" key="2">
    <source>
        <dbReference type="PROSITE-ProRule" id="PRU01175"/>
    </source>
</evidence>
<proteinExistence type="inferred from homology"/>
<accession>B1LLP5</accession>
<name>5DNU_ECOSM</name>
<dbReference type="EC" id="3.1.3.89" evidence="1"/>
<dbReference type="EMBL" id="CP000970">
    <property type="protein sequence ID" value="ACB18129.1"/>
    <property type="molecule type" value="Genomic_DNA"/>
</dbReference>
<dbReference type="RefSeq" id="WP_000813860.1">
    <property type="nucleotide sequence ID" value="NC_010498.1"/>
</dbReference>
<dbReference type="SMR" id="B1LLP5"/>
<dbReference type="GeneID" id="93774883"/>
<dbReference type="KEGG" id="ecm:EcSMS35_2446"/>
<dbReference type="HOGENOM" id="CLU_084784_0_0_6"/>
<dbReference type="Proteomes" id="UP000007011">
    <property type="component" value="Chromosome"/>
</dbReference>
<dbReference type="GO" id="GO:0005737">
    <property type="term" value="C:cytoplasm"/>
    <property type="evidence" value="ECO:0007669"/>
    <property type="project" value="UniProtKB-SubCell"/>
</dbReference>
<dbReference type="GO" id="GO:0002953">
    <property type="term" value="F:5'-deoxynucleotidase activity"/>
    <property type="evidence" value="ECO:0007669"/>
    <property type="project" value="UniProtKB-EC"/>
</dbReference>
<dbReference type="GO" id="GO:0046872">
    <property type="term" value="F:metal ion binding"/>
    <property type="evidence" value="ECO:0007669"/>
    <property type="project" value="UniProtKB-KW"/>
</dbReference>
<dbReference type="GO" id="GO:0000166">
    <property type="term" value="F:nucleotide binding"/>
    <property type="evidence" value="ECO:0007669"/>
    <property type="project" value="UniProtKB-KW"/>
</dbReference>
<dbReference type="CDD" id="cd00077">
    <property type="entry name" value="HDc"/>
    <property type="match status" value="1"/>
</dbReference>
<dbReference type="FunFam" id="1.10.3210.10:FF:000002">
    <property type="entry name" value="Nucleotidase YfbR"/>
    <property type="match status" value="1"/>
</dbReference>
<dbReference type="Gene3D" id="1.10.3210.10">
    <property type="entry name" value="Hypothetical protein af1432"/>
    <property type="match status" value="1"/>
</dbReference>
<dbReference type="HAMAP" id="MF_01100">
    <property type="entry name" value="5DNU"/>
    <property type="match status" value="1"/>
</dbReference>
<dbReference type="InterPro" id="IPR003607">
    <property type="entry name" value="HD/PDEase_dom"/>
</dbReference>
<dbReference type="InterPro" id="IPR006674">
    <property type="entry name" value="HD_domain"/>
</dbReference>
<dbReference type="InterPro" id="IPR022971">
    <property type="entry name" value="YfbR"/>
</dbReference>
<dbReference type="InterPro" id="IPR039356">
    <property type="entry name" value="YfbR/HDDC2"/>
</dbReference>
<dbReference type="NCBIfam" id="NF003009">
    <property type="entry name" value="PRK03826.1"/>
    <property type="match status" value="1"/>
</dbReference>
<dbReference type="PANTHER" id="PTHR11845">
    <property type="entry name" value="5'-DEOXYNUCLEOTIDASE HDDC2"/>
    <property type="match status" value="1"/>
</dbReference>
<dbReference type="PANTHER" id="PTHR11845:SF13">
    <property type="entry name" value="5'-DEOXYNUCLEOTIDASE HDDC2"/>
    <property type="match status" value="1"/>
</dbReference>
<dbReference type="Pfam" id="PF12917">
    <property type="entry name" value="YfbR-like"/>
    <property type="match status" value="1"/>
</dbReference>
<dbReference type="SMART" id="SM00471">
    <property type="entry name" value="HDc"/>
    <property type="match status" value="1"/>
</dbReference>
<dbReference type="SUPFAM" id="SSF109604">
    <property type="entry name" value="HD-domain/PDEase-like"/>
    <property type="match status" value="1"/>
</dbReference>
<dbReference type="PROSITE" id="PS51831">
    <property type="entry name" value="HD"/>
    <property type="match status" value="1"/>
</dbReference>
<reference key="1">
    <citation type="journal article" date="2008" name="J. Bacteriol.">
        <title>Insights into the environmental resistance gene pool from the genome sequence of the multidrug-resistant environmental isolate Escherichia coli SMS-3-5.</title>
        <authorList>
            <person name="Fricke W.F."/>
            <person name="Wright M.S."/>
            <person name="Lindell A.H."/>
            <person name="Harkins D.M."/>
            <person name="Baker-Austin C."/>
            <person name="Ravel J."/>
            <person name="Stepanauskas R."/>
        </authorList>
    </citation>
    <scope>NUCLEOTIDE SEQUENCE [LARGE SCALE GENOMIC DNA]</scope>
    <source>
        <strain>SMS-3-5 / SECEC</strain>
    </source>
</reference>
<protein>
    <recommendedName>
        <fullName evidence="1">5'-deoxynucleotidase YfbR</fullName>
        <ecNumber evidence="1">3.1.3.89</ecNumber>
    </recommendedName>
    <alternativeName>
        <fullName evidence="1">5'-deoxyribonucleotidase</fullName>
    </alternativeName>
    <alternativeName>
        <fullName evidence="1">Nucleoside 5'-monophosphate phosphohydrolase</fullName>
    </alternativeName>
</protein>
<feature type="chain" id="PRO_1000136968" description="5'-deoxynucleotidase YfbR">
    <location>
        <begin position="1"/>
        <end position="199"/>
    </location>
</feature>
<feature type="domain" description="HD" evidence="2">
    <location>
        <begin position="30"/>
        <end position="142"/>
    </location>
</feature>
<feature type="binding site" evidence="1">
    <location>
        <begin position="18"/>
        <end position="19"/>
    </location>
    <ligand>
        <name>substrate</name>
    </ligand>
</feature>
<feature type="binding site" evidence="1">
    <location>
        <position position="33"/>
    </location>
    <ligand>
        <name>a divalent metal cation</name>
        <dbReference type="ChEBI" id="CHEBI:60240"/>
    </ligand>
</feature>
<feature type="binding site" evidence="1">
    <location>
        <position position="33"/>
    </location>
    <ligand>
        <name>substrate</name>
    </ligand>
</feature>
<feature type="binding site" evidence="1">
    <location>
        <position position="68"/>
    </location>
    <ligand>
        <name>a divalent metal cation</name>
        <dbReference type="ChEBI" id="CHEBI:60240"/>
    </ligand>
</feature>
<feature type="binding site" evidence="1">
    <location>
        <position position="69"/>
    </location>
    <ligand>
        <name>a divalent metal cation</name>
        <dbReference type="ChEBI" id="CHEBI:60240"/>
    </ligand>
</feature>
<feature type="binding site" evidence="1">
    <location>
        <position position="69"/>
    </location>
    <ligand>
        <name>substrate</name>
    </ligand>
</feature>
<feature type="binding site" evidence="1">
    <location>
        <begin position="77"/>
        <end position="80"/>
    </location>
    <ligand>
        <name>substrate</name>
    </ligand>
</feature>
<feature type="binding site" evidence="1">
    <location>
        <position position="137"/>
    </location>
    <ligand>
        <name>a divalent metal cation</name>
        <dbReference type="ChEBI" id="CHEBI:60240"/>
    </ligand>
</feature>
<feature type="binding site" evidence="1">
    <location>
        <position position="137"/>
    </location>
    <ligand>
        <name>substrate</name>
    </ligand>
</feature>
<feature type="site" description="Appears to be important in orienting the phosphate for catalysis" evidence="1">
    <location>
        <position position="18"/>
    </location>
</feature>
<gene>
    <name evidence="1" type="primary">yfbR</name>
    <name type="ordered locus">EcSMS35_2446</name>
</gene>
<organism>
    <name type="scientific">Escherichia coli (strain SMS-3-5 / SECEC)</name>
    <dbReference type="NCBI Taxonomy" id="439855"/>
    <lineage>
        <taxon>Bacteria</taxon>
        <taxon>Pseudomonadati</taxon>
        <taxon>Pseudomonadota</taxon>
        <taxon>Gammaproteobacteria</taxon>
        <taxon>Enterobacterales</taxon>
        <taxon>Enterobacteriaceae</taxon>
        <taxon>Escherichia</taxon>
    </lineage>
</organism>
<keyword id="KW-0963">Cytoplasm</keyword>
<keyword id="KW-0378">Hydrolase</keyword>
<keyword id="KW-0479">Metal-binding</keyword>
<keyword id="KW-0547">Nucleotide-binding</keyword>
<comment type="function">
    <text evidence="1">Catalyzes the strictly specific dephosphorylation of 2'-deoxyribonucleoside 5'-monophosphates.</text>
</comment>
<comment type="catalytic activity">
    <reaction evidence="1">
        <text>a 2'-deoxyribonucleoside 5'-phosphate + H2O = a 2'-deoxyribonucleoside + phosphate</text>
        <dbReference type="Rhea" id="RHEA:36167"/>
        <dbReference type="ChEBI" id="CHEBI:15377"/>
        <dbReference type="ChEBI" id="CHEBI:18274"/>
        <dbReference type="ChEBI" id="CHEBI:43474"/>
        <dbReference type="ChEBI" id="CHEBI:65317"/>
        <dbReference type="EC" id="3.1.3.89"/>
    </reaction>
</comment>
<comment type="cofactor">
    <cofactor evidence="1">
        <name>a divalent metal cation</name>
        <dbReference type="ChEBI" id="CHEBI:60240"/>
    </cofactor>
</comment>
<comment type="subunit">
    <text evidence="1">Homodimer.</text>
</comment>
<comment type="subcellular location">
    <subcellularLocation>
        <location evidence="1">Cytoplasm</location>
    </subcellularLocation>
</comment>
<comment type="similarity">
    <text evidence="1">Belongs to the 5DNU family.</text>
</comment>
<sequence>MKQSHFFAHLSRLKLINRWPLMRNVRTENVSEHSLQVAMVAHALAAIKNRKFGGNVNAERIALLAMYHDASEVLTGDLPTPVKYFNSQIAQEYKAIEKIAQQKLVDMVPEELRDIFAPLIDEHAYSDEEKSLVKQADALCAYLKCLEELAAGNNEFLLAKTRLEATLEARRSQEMDYFMEVFVPSFHLSLDEISQDSPL</sequence>